<name>PYRC_RALPJ</name>
<comment type="function">
    <text evidence="1">Catalyzes the reversible cyclization of carbamoyl aspartate to dihydroorotate.</text>
</comment>
<comment type="catalytic activity">
    <reaction evidence="1">
        <text>(S)-dihydroorotate + H2O = N-carbamoyl-L-aspartate + H(+)</text>
        <dbReference type="Rhea" id="RHEA:24296"/>
        <dbReference type="ChEBI" id="CHEBI:15377"/>
        <dbReference type="ChEBI" id="CHEBI:15378"/>
        <dbReference type="ChEBI" id="CHEBI:30864"/>
        <dbReference type="ChEBI" id="CHEBI:32814"/>
        <dbReference type="EC" id="3.5.2.3"/>
    </reaction>
</comment>
<comment type="cofactor">
    <cofactor evidence="1">
        <name>Zn(2+)</name>
        <dbReference type="ChEBI" id="CHEBI:29105"/>
    </cofactor>
    <text evidence="1">Binds 2 Zn(2+) ions per subunit.</text>
</comment>
<comment type="pathway">
    <text evidence="1">Pyrimidine metabolism; UMP biosynthesis via de novo pathway; (S)-dihydroorotate from bicarbonate: step 3/3.</text>
</comment>
<comment type="subunit">
    <text evidence="1">Homodimer.</text>
</comment>
<comment type="similarity">
    <text evidence="1">Belongs to the metallo-dependent hydrolases superfamily. DHOase family. Class II DHOase subfamily.</text>
</comment>
<reference key="1">
    <citation type="submission" date="2008-05" db="EMBL/GenBank/DDBJ databases">
        <title>Complete sequence of chromosome 1 of Ralstonia pickettii 12J.</title>
        <authorList>
            <person name="Lucas S."/>
            <person name="Copeland A."/>
            <person name="Lapidus A."/>
            <person name="Glavina del Rio T."/>
            <person name="Dalin E."/>
            <person name="Tice H."/>
            <person name="Bruce D."/>
            <person name="Goodwin L."/>
            <person name="Pitluck S."/>
            <person name="Meincke L."/>
            <person name="Brettin T."/>
            <person name="Detter J.C."/>
            <person name="Han C."/>
            <person name="Kuske C.R."/>
            <person name="Schmutz J."/>
            <person name="Larimer F."/>
            <person name="Land M."/>
            <person name="Hauser L."/>
            <person name="Kyrpides N."/>
            <person name="Mikhailova N."/>
            <person name="Marsh T."/>
            <person name="Richardson P."/>
        </authorList>
    </citation>
    <scope>NUCLEOTIDE SEQUENCE [LARGE SCALE GENOMIC DNA]</scope>
    <source>
        <strain>12J</strain>
    </source>
</reference>
<evidence type="ECO:0000255" key="1">
    <source>
        <dbReference type="HAMAP-Rule" id="MF_00219"/>
    </source>
</evidence>
<protein>
    <recommendedName>
        <fullName evidence="1">Dihydroorotase</fullName>
        <shortName evidence="1">DHOase</shortName>
        <ecNumber evidence="1">3.5.2.3</ecNumber>
    </recommendedName>
</protein>
<feature type="chain" id="PRO_1000100052" description="Dihydroorotase">
    <location>
        <begin position="1"/>
        <end position="344"/>
    </location>
</feature>
<feature type="active site" evidence="1">
    <location>
        <position position="248"/>
    </location>
</feature>
<feature type="binding site" evidence="1">
    <location>
        <position position="14"/>
    </location>
    <ligand>
        <name>Zn(2+)</name>
        <dbReference type="ChEBI" id="CHEBI:29105"/>
        <label>1</label>
    </ligand>
</feature>
<feature type="binding site" evidence="1">
    <location>
        <begin position="16"/>
        <end position="18"/>
    </location>
    <ligand>
        <name>substrate</name>
    </ligand>
</feature>
<feature type="binding site" evidence="1">
    <location>
        <position position="16"/>
    </location>
    <ligand>
        <name>Zn(2+)</name>
        <dbReference type="ChEBI" id="CHEBI:29105"/>
        <label>1</label>
    </ligand>
</feature>
<feature type="binding site" evidence="1">
    <location>
        <position position="42"/>
    </location>
    <ligand>
        <name>substrate</name>
    </ligand>
</feature>
<feature type="binding site" description="via carbamate group" evidence="1">
    <location>
        <position position="100"/>
    </location>
    <ligand>
        <name>Zn(2+)</name>
        <dbReference type="ChEBI" id="CHEBI:29105"/>
        <label>1</label>
    </ligand>
</feature>
<feature type="binding site" description="via carbamate group" evidence="1">
    <location>
        <position position="100"/>
    </location>
    <ligand>
        <name>Zn(2+)</name>
        <dbReference type="ChEBI" id="CHEBI:29105"/>
        <label>2</label>
    </ligand>
</feature>
<feature type="binding site" evidence="1">
    <location>
        <position position="137"/>
    </location>
    <ligand>
        <name>substrate</name>
    </ligand>
</feature>
<feature type="binding site" evidence="1">
    <location>
        <position position="137"/>
    </location>
    <ligand>
        <name>Zn(2+)</name>
        <dbReference type="ChEBI" id="CHEBI:29105"/>
        <label>2</label>
    </ligand>
</feature>
<feature type="binding site" evidence="1">
    <location>
        <position position="175"/>
    </location>
    <ligand>
        <name>Zn(2+)</name>
        <dbReference type="ChEBI" id="CHEBI:29105"/>
        <label>2</label>
    </ligand>
</feature>
<feature type="binding site" evidence="1">
    <location>
        <position position="220"/>
    </location>
    <ligand>
        <name>substrate</name>
    </ligand>
</feature>
<feature type="binding site" evidence="1">
    <location>
        <position position="248"/>
    </location>
    <ligand>
        <name>Zn(2+)</name>
        <dbReference type="ChEBI" id="CHEBI:29105"/>
        <label>1</label>
    </ligand>
</feature>
<feature type="binding site" evidence="1">
    <location>
        <position position="252"/>
    </location>
    <ligand>
        <name>substrate</name>
    </ligand>
</feature>
<feature type="binding site" evidence="1">
    <location>
        <position position="264"/>
    </location>
    <ligand>
        <name>substrate</name>
    </ligand>
</feature>
<feature type="modified residue" description="N6-carboxylysine" evidence="1">
    <location>
        <position position="100"/>
    </location>
</feature>
<gene>
    <name evidence="1" type="primary">pyrC</name>
    <name type="ordered locus">Rpic_0363</name>
</gene>
<accession>B2UFJ8</accession>
<organism>
    <name type="scientific">Ralstonia pickettii (strain 12J)</name>
    <dbReference type="NCBI Taxonomy" id="402626"/>
    <lineage>
        <taxon>Bacteria</taxon>
        <taxon>Pseudomonadati</taxon>
        <taxon>Pseudomonadota</taxon>
        <taxon>Betaproteobacteria</taxon>
        <taxon>Burkholderiales</taxon>
        <taxon>Burkholderiaceae</taxon>
        <taxon>Ralstonia</taxon>
    </lineage>
</organism>
<dbReference type="EC" id="3.5.2.3" evidence="1"/>
<dbReference type="EMBL" id="CP001068">
    <property type="protein sequence ID" value="ACD25521.1"/>
    <property type="molecule type" value="Genomic_DNA"/>
</dbReference>
<dbReference type="SMR" id="B2UFJ8"/>
<dbReference type="STRING" id="402626.Rpic_0363"/>
<dbReference type="MEROPS" id="M38.A02"/>
<dbReference type="KEGG" id="rpi:Rpic_0363"/>
<dbReference type="eggNOG" id="COG0418">
    <property type="taxonomic scope" value="Bacteria"/>
</dbReference>
<dbReference type="HOGENOM" id="CLU_041558_1_0_4"/>
<dbReference type="UniPathway" id="UPA00070">
    <property type="reaction ID" value="UER00117"/>
</dbReference>
<dbReference type="GO" id="GO:0005829">
    <property type="term" value="C:cytosol"/>
    <property type="evidence" value="ECO:0007669"/>
    <property type="project" value="TreeGrafter"/>
</dbReference>
<dbReference type="GO" id="GO:0004151">
    <property type="term" value="F:dihydroorotase activity"/>
    <property type="evidence" value="ECO:0007669"/>
    <property type="project" value="UniProtKB-UniRule"/>
</dbReference>
<dbReference type="GO" id="GO:0008270">
    <property type="term" value="F:zinc ion binding"/>
    <property type="evidence" value="ECO:0007669"/>
    <property type="project" value="UniProtKB-UniRule"/>
</dbReference>
<dbReference type="GO" id="GO:0006207">
    <property type="term" value="P:'de novo' pyrimidine nucleobase biosynthetic process"/>
    <property type="evidence" value="ECO:0007669"/>
    <property type="project" value="TreeGrafter"/>
</dbReference>
<dbReference type="GO" id="GO:0044205">
    <property type="term" value="P:'de novo' UMP biosynthetic process"/>
    <property type="evidence" value="ECO:0007669"/>
    <property type="project" value="UniProtKB-UniRule"/>
</dbReference>
<dbReference type="CDD" id="cd01294">
    <property type="entry name" value="DHOase"/>
    <property type="match status" value="1"/>
</dbReference>
<dbReference type="FunFam" id="3.20.20.140:FF:000006">
    <property type="entry name" value="Dihydroorotase"/>
    <property type="match status" value="1"/>
</dbReference>
<dbReference type="Gene3D" id="3.20.20.140">
    <property type="entry name" value="Metal-dependent hydrolases"/>
    <property type="match status" value="1"/>
</dbReference>
<dbReference type="HAMAP" id="MF_00219">
    <property type="entry name" value="PyrC_classII"/>
    <property type="match status" value="1"/>
</dbReference>
<dbReference type="InterPro" id="IPR006680">
    <property type="entry name" value="Amidohydro-rel"/>
</dbReference>
<dbReference type="InterPro" id="IPR004721">
    <property type="entry name" value="DHOdimr"/>
</dbReference>
<dbReference type="InterPro" id="IPR002195">
    <property type="entry name" value="Dihydroorotase_CS"/>
</dbReference>
<dbReference type="InterPro" id="IPR032466">
    <property type="entry name" value="Metal_Hydrolase"/>
</dbReference>
<dbReference type="NCBIfam" id="TIGR00856">
    <property type="entry name" value="pyrC_dimer"/>
    <property type="match status" value="1"/>
</dbReference>
<dbReference type="PANTHER" id="PTHR43137">
    <property type="entry name" value="DIHYDROOROTASE"/>
    <property type="match status" value="1"/>
</dbReference>
<dbReference type="PANTHER" id="PTHR43137:SF1">
    <property type="entry name" value="DIHYDROOROTASE"/>
    <property type="match status" value="1"/>
</dbReference>
<dbReference type="Pfam" id="PF01979">
    <property type="entry name" value="Amidohydro_1"/>
    <property type="match status" value="1"/>
</dbReference>
<dbReference type="PIRSF" id="PIRSF001237">
    <property type="entry name" value="DHOdimr"/>
    <property type="match status" value="1"/>
</dbReference>
<dbReference type="SUPFAM" id="SSF51556">
    <property type="entry name" value="Metallo-dependent hydrolases"/>
    <property type="match status" value="1"/>
</dbReference>
<dbReference type="PROSITE" id="PS00482">
    <property type="entry name" value="DIHYDROOROTASE_1"/>
    <property type="match status" value="1"/>
</dbReference>
<dbReference type="PROSITE" id="PS00483">
    <property type="entry name" value="DIHYDROOROTASE_2"/>
    <property type="match status" value="1"/>
</dbReference>
<keyword id="KW-0378">Hydrolase</keyword>
<keyword id="KW-0479">Metal-binding</keyword>
<keyword id="KW-0665">Pyrimidine biosynthesis</keyword>
<keyword id="KW-0862">Zinc</keyword>
<proteinExistence type="inferred from homology"/>
<sequence>MTDTLTIVRPDDWHLHLRDGDALADVVGDTARQFGRAIIMPNLKPPVTTTAQARAYRERILAALPAGTQFEPLMTLYLTDNTSPEVIREARASGFIHGVKLYPAGATTNSDAGVTDLRRCAKTLEAMQEVGMPLLVHGEVTDPTVDIFDREAVFIDTVMLPLRRDFPALKVVFEHITTKHAAEYVRDAEGPVGATITAHHLLYNRNALFVGGIRPHYYCLPVLKRETHRLALVAAATSGHPRFFLGTDSAPHAKGVKEHACGCAGCYTALHAMELYAEAFEDANALDKLEGFASLHGPDFYGLPRNAGTLTLTRSQWQLPAEVPFGEQTLVPLRGGEMLRWKSV</sequence>